<comment type="function">
    <text evidence="1">Methylates ribosomal protein L11.</text>
</comment>
<comment type="catalytic activity">
    <reaction evidence="1">
        <text>L-lysyl-[protein] + 3 S-adenosyl-L-methionine = N(6),N(6),N(6)-trimethyl-L-lysyl-[protein] + 3 S-adenosyl-L-homocysteine + 3 H(+)</text>
        <dbReference type="Rhea" id="RHEA:54192"/>
        <dbReference type="Rhea" id="RHEA-COMP:9752"/>
        <dbReference type="Rhea" id="RHEA-COMP:13826"/>
        <dbReference type="ChEBI" id="CHEBI:15378"/>
        <dbReference type="ChEBI" id="CHEBI:29969"/>
        <dbReference type="ChEBI" id="CHEBI:57856"/>
        <dbReference type="ChEBI" id="CHEBI:59789"/>
        <dbReference type="ChEBI" id="CHEBI:61961"/>
    </reaction>
</comment>
<comment type="subcellular location">
    <subcellularLocation>
        <location evidence="1">Cytoplasm</location>
    </subcellularLocation>
</comment>
<comment type="similarity">
    <text evidence="1">Belongs to the methyltransferase superfamily. PrmA family.</text>
</comment>
<name>PRMA_THENN</name>
<sequence>MRFKELVFLLKIDEEELLEKLYEEGFFNFAIEENKEGDRLLRVYLREGETLPSFLSNWKILDERLTTPKDWMVELEPFEIVEDVVVDPTEKVTRTDKIVVKLSPGVAFGTGLHPTTQMSVFFLKKYLKKGDRVVDVGCGTGILAIVAKKLGASYVMAVDVDEQAVEVAKENVQKNSVDVIVKRSDLLSEVDGVFDLVVSNILAEIHLRLLEDVDRITHERSILILSGIVDTKENMVREKASKKGWNLLERKQEREWVTLVMKRS</sequence>
<keyword id="KW-0963">Cytoplasm</keyword>
<keyword id="KW-0489">Methyltransferase</keyword>
<keyword id="KW-0949">S-adenosyl-L-methionine</keyword>
<keyword id="KW-0808">Transferase</keyword>
<evidence type="ECO:0000255" key="1">
    <source>
        <dbReference type="HAMAP-Rule" id="MF_00735"/>
    </source>
</evidence>
<organism>
    <name type="scientific">Thermotoga neapolitana (strain ATCC 49049 / DSM 4359 / NBRC 107923 / NS-E)</name>
    <dbReference type="NCBI Taxonomy" id="309803"/>
    <lineage>
        <taxon>Bacteria</taxon>
        <taxon>Thermotogati</taxon>
        <taxon>Thermotogota</taxon>
        <taxon>Thermotogae</taxon>
        <taxon>Thermotogales</taxon>
        <taxon>Thermotogaceae</taxon>
        <taxon>Thermotoga</taxon>
    </lineage>
</organism>
<feature type="chain" id="PRO_1000148147" description="Ribosomal protein L11 methyltransferase">
    <location>
        <begin position="1"/>
        <end position="264"/>
    </location>
</feature>
<feature type="binding site" evidence="1">
    <location>
        <position position="116"/>
    </location>
    <ligand>
        <name>S-adenosyl-L-methionine</name>
        <dbReference type="ChEBI" id="CHEBI:59789"/>
    </ligand>
</feature>
<feature type="binding site" evidence="1">
    <location>
        <position position="137"/>
    </location>
    <ligand>
        <name>S-adenosyl-L-methionine</name>
        <dbReference type="ChEBI" id="CHEBI:59789"/>
    </ligand>
</feature>
<feature type="binding site" evidence="1">
    <location>
        <position position="159"/>
    </location>
    <ligand>
        <name>S-adenosyl-L-methionine</name>
        <dbReference type="ChEBI" id="CHEBI:59789"/>
    </ligand>
</feature>
<feature type="binding site" evidence="1">
    <location>
        <position position="200"/>
    </location>
    <ligand>
        <name>S-adenosyl-L-methionine</name>
        <dbReference type="ChEBI" id="CHEBI:59789"/>
    </ligand>
</feature>
<accession>B9K9N3</accession>
<gene>
    <name evidence="1" type="primary">prmA</name>
    <name type="ordered locus">CTN_1490</name>
</gene>
<proteinExistence type="inferred from homology"/>
<dbReference type="EC" id="2.1.1.-" evidence="1"/>
<dbReference type="EMBL" id="CP000916">
    <property type="protein sequence ID" value="ACM23666.1"/>
    <property type="molecule type" value="Genomic_DNA"/>
</dbReference>
<dbReference type="RefSeq" id="WP_015919955.1">
    <property type="nucleotide sequence ID" value="NC_011978.1"/>
</dbReference>
<dbReference type="SMR" id="B9K9N3"/>
<dbReference type="STRING" id="309803.CTN_1490"/>
<dbReference type="KEGG" id="tna:CTN_1490"/>
<dbReference type="eggNOG" id="COG2264">
    <property type="taxonomic scope" value="Bacteria"/>
</dbReference>
<dbReference type="HOGENOM" id="CLU_049382_0_2_0"/>
<dbReference type="Proteomes" id="UP000000445">
    <property type="component" value="Chromosome"/>
</dbReference>
<dbReference type="GO" id="GO:0005737">
    <property type="term" value="C:cytoplasm"/>
    <property type="evidence" value="ECO:0007669"/>
    <property type="project" value="UniProtKB-SubCell"/>
</dbReference>
<dbReference type="GO" id="GO:0016279">
    <property type="term" value="F:protein-lysine N-methyltransferase activity"/>
    <property type="evidence" value="ECO:0007669"/>
    <property type="project" value="RHEA"/>
</dbReference>
<dbReference type="GO" id="GO:0032259">
    <property type="term" value="P:methylation"/>
    <property type="evidence" value="ECO:0007669"/>
    <property type="project" value="UniProtKB-KW"/>
</dbReference>
<dbReference type="CDD" id="cd02440">
    <property type="entry name" value="AdoMet_MTases"/>
    <property type="match status" value="1"/>
</dbReference>
<dbReference type="Gene3D" id="3.40.50.150">
    <property type="entry name" value="Vaccinia Virus protein VP39"/>
    <property type="match status" value="1"/>
</dbReference>
<dbReference type="HAMAP" id="MF_00735">
    <property type="entry name" value="Methyltr_PrmA"/>
    <property type="match status" value="1"/>
</dbReference>
<dbReference type="InterPro" id="IPR050078">
    <property type="entry name" value="Ribosomal_L11_MeTrfase_PrmA"/>
</dbReference>
<dbReference type="InterPro" id="IPR004498">
    <property type="entry name" value="Ribosomal_PrmA_MeTrfase"/>
</dbReference>
<dbReference type="InterPro" id="IPR029063">
    <property type="entry name" value="SAM-dependent_MTases_sf"/>
</dbReference>
<dbReference type="PANTHER" id="PTHR43648">
    <property type="entry name" value="ELECTRON TRANSFER FLAVOPROTEIN BETA SUBUNIT LYSINE METHYLTRANSFERASE"/>
    <property type="match status" value="1"/>
</dbReference>
<dbReference type="PANTHER" id="PTHR43648:SF1">
    <property type="entry name" value="ELECTRON TRANSFER FLAVOPROTEIN BETA SUBUNIT LYSINE METHYLTRANSFERASE"/>
    <property type="match status" value="1"/>
</dbReference>
<dbReference type="Pfam" id="PF06325">
    <property type="entry name" value="PrmA"/>
    <property type="match status" value="1"/>
</dbReference>
<dbReference type="PIRSF" id="PIRSF000401">
    <property type="entry name" value="RPL11_MTase"/>
    <property type="match status" value="1"/>
</dbReference>
<dbReference type="SUPFAM" id="SSF53335">
    <property type="entry name" value="S-adenosyl-L-methionine-dependent methyltransferases"/>
    <property type="match status" value="1"/>
</dbReference>
<protein>
    <recommendedName>
        <fullName evidence="1">Ribosomal protein L11 methyltransferase</fullName>
        <shortName evidence="1">L11 Mtase</shortName>
        <ecNumber evidence="1">2.1.1.-</ecNumber>
    </recommendedName>
</protein>
<reference key="1">
    <citation type="submission" date="2007-11" db="EMBL/GenBank/DDBJ databases">
        <title>The genome sequence of the hyperthermophilic bacterium Thermotoga neapolitana.</title>
        <authorList>
            <person name="Lim S.K."/>
            <person name="Kim J.S."/>
            <person name="Cha S.H."/>
            <person name="Park B.C."/>
            <person name="Lee D.S."/>
            <person name="Tae H.S."/>
            <person name="Kim S.-J."/>
            <person name="Kim J.J."/>
            <person name="Park K.J."/>
            <person name="Lee S.Y."/>
        </authorList>
    </citation>
    <scope>NUCLEOTIDE SEQUENCE [LARGE SCALE GENOMIC DNA]</scope>
    <source>
        <strain>ATCC 49049 / DSM 4359 / NBRC 107923 / NS-E</strain>
    </source>
</reference>